<sequence>MSAHEPHTSLVRPAAKAWHARLELGFERQPGGRTALAHRRHVGPLRVQRALYPEGDAICHAVIVHPPGGVAGGDRLEIDVRLDAGTHAVLTTPGATKWYKSNGLDARQRIDIDVGAHAKLDWLPQNNLFFDAAHASLEFVLALGDGASVLGWDATQLGRQAAGEAWSAGSIASFSKIVGPSGRPLWVERARLDAGDPLRAAPQGLGGFAVYGTLWALGAACTEALAESIAPALPFDDALRAGVTCVAPGTLLIRALAHSMEALQRLLAEQWLALRPIVHGVDPKPLRLWQT</sequence>
<gene>
    <name evidence="1" type="primary">ureD</name>
    <name type="ordered locus">BURPS1710b_3132</name>
</gene>
<organism>
    <name type="scientific">Burkholderia pseudomallei (strain 1710b)</name>
    <dbReference type="NCBI Taxonomy" id="320372"/>
    <lineage>
        <taxon>Bacteria</taxon>
        <taxon>Pseudomonadati</taxon>
        <taxon>Pseudomonadota</taxon>
        <taxon>Betaproteobacteria</taxon>
        <taxon>Burkholderiales</taxon>
        <taxon>Burkholderiaceae</taxon>
        <taxon>Burkholderia</taxon>
        <taxon>pseudomallei group</taxon>
    </lineage>
</organism>
<dbReference type="EMBL" id="CP000124">
    <property type="protein sequence ID" value="ABA47805.1"/>
    <property type="status" value="ALT_INIT"/>
    <property type="molecule type" value="Genomic_DNA"/>
</dbReference>
<dbReference type="RefSeq" id="WP_004185533.1">
    <property type="nucleotide sequence ID" value="NC_007434.1"/>
</dbReference>
<dbReference type="SMR" id="Q3JPJ9"/>
<dbReference type="EnsemblBacteria" id="ABA47805">
    <property type="protein sequence ID" value="ABA47805"/>
    <property type="gene ID" value="BURPS1710b_3132"/>
</dbReference>
<dbReference type="KEGG" id="bpm:BURPS1710b_3132"/>
<dbReference type="HOGENOM" id="CLU_056339_0_0_4"/>
<dbReference type="Proteomes" id="UP000002700">
    <property type="component" value="Chromosome I"/>
</dbReference>
<dbReference type="GO" id="GO:0005737">
    <property type="term" value="C:cytoplasm"/>
    <property type="evidence" value="ECO:0007669"/>
    <property type="project" value="UniProtKB-SubCell"/>
</dbReference>
<dbReference type="GO" id="GO:0016151">
    <property type="term" value="F:nickel cation binding"/>
    <property type="evidence" value="ECO:0007669"/>
    <property type="project" value="UniProtKB-UniRule"/>
</dbReference>
<dbReference type="HAMAP" id="MF_01384">
    <property type="entry name" value="UreD"/>
    <property type="match status" value="1"/>
</dbReference>
<dbReference type="InterPro" id="IPR002669">
    <property type="entry name" value="UreD"/>
</dbReference>
<dbReference type="PANTHER" id="PTHR33643">
    <property type="entry name" value="UREASE ACCESSORY PROTEIN D"/>
    <property type="match status" value="1"/>
</dbReference>
<dbReference type="PANTHER" id="PTHR33643:SF1">
    <property type="entry name" value="UREASE ACCESSORY PROTEIN D"/>
    <property type="match status" value="1"/>
</dbReference>
<dbReference type="Pfam" id="PF01774">
    <property type="entry name" value="UreD"/>
    <property type="match status" value="1"/>
</dbReference>
<protein>
    <recommendedName>
        <fullName evidence="1">Urease accessory protein UreD</fullName>
    </recommendedName>
</protein>
<evidence type="ECO:0000255" key="1">
    <source>
        <dbReference type="HAMAP-Rule" id="MF_01384"/>
    </source>
</evidence>
<evidence type="ECO:0000305" key="2"/>
<keyword id="KW-0143">Chaperone</keyword>
<keyword id="KW-0963">Cytoplasm</keyword>
<keyword id="KW-0996">Nickel insertion</keyword>
<comment type="function">
    <text evidence="1">Required for maturation of urease via the functional incorporation of the urease nickel metallocenter.</text>
</comment>
<comment type="subunit">
    <text evidence="1">UreD, UreF and UreG form a complex that acts as a GTP-hydrolysis-dependent molecular chaperone, activating the urease apoprotein by helping to assemble the nickel containing metallocenter of UreC. The UreE protein probably delivers the nickel.</text>
</comment>
<comment type="subcellular location">
    <subcellularLocation>
        <location evidence="1">Cytoplasm</location>
    </subcellularLocation>
</comment>
<comment type="similarity">
    <text evidence="1">Belongs to the UreD family.</text>
</comment>
<comment type="sequence caution" evidence="2">
    <conflict type="erroneous initiation">
        <sequence resource="EMBL-CDS" id="ABA47805"/>
    </conflict>
</comment>
<feature type="chain" id="PRO_0000340439" description="Urease accessory protein UreD">
    <location>
        <begin position="1"/>
        <end position="291"/>
    </location>
</feature>
<proteinExistence type="inferred from homology"/>
<reference key="1">
    <citation type="journal article" date="2010" name="Genome Biol. Evol.">
        <title>Continuing evolution of Burkholderia mallei through genome reduction and large-scale rearrangements.</title>
        <authorList>
            <person name="Losada L."/>
            <person name="Ronning C.M."/>
            <person name="DeShazer D."/>
            <person name="Woods D."/>
            <person name="Fedorova N."/>
            <person name="Kim H.S."/>
            <person name="Shabalina S.A."/>
            <person name="Pearson T.R."/>
            <person name="Brinkac L."/>
            <person name="Tan P."/>
            <person name="Nandi T."/>
            <person name="Crabtree J."/>
            <person name="Badger J."/>
            <person name="Beckstrom-Sternberg S."/>
            <person name="Saqib M."/>
            <person name="Schutzer S.E."/>
            <person name="Keim P."/>
            <person name="Nierman W.C."/>
        </authorList>
    </citation>
    <scope>NUCLEOTIDE SEQUENCE [LARGE SCALE GENOMIC DNA]</scope>
    <source>
        <strain>1710b</strain>
    </source>
</reference>
<accession>Q3JPJ9</accession>
<name>URED_BURP1</name>